<reference key="1">
    <citation type="journal article" date="2009" name="J. Bacteriol.">
        <title>Genome sequence of Azotobacter vinelandii, an obligate aerobe specialized to support diverse anaerobic metabolic processes.</title>
        <authorList>
            <person name="Setubal J.C."/>
            <person name="Dos Santos P."/>
            <person name="Goldman B.S."/>
            <person name="Ertesvaag H."/>
            <person name="Espin G."/>
            <person name="Rubio L.M."/>
            <person name="Valla S."/>
            <person name="Almeida N.F."/>
            <person name="Balasubramanian D."/>
            <person name="Cromes L."/>
            <person name="Curatti L."/>
            <person name="Du Z."/>
            <person name="Godsy E."/>
            <person name="Goodner B."/>
            <person name="Hellner-Burris K."/>
            <person name="Hernandez J.A."/>
            <person name="Houmiel K."/>
            <person name="Imperial J."/>
            <person name="Kennedy C."/>
            <person name="Larson T.J."/>
            <person name="Latreille P."/>
            <person name="Ligon L.S."/>
            <person name="Lu J."/>
            <person name="Maerk M."/>
            <person name="Miller N.M."/>
            <person name="Norton S."/>
            <person name="O'Carroll I.P."/>
            <person name="Paulsen I."/>
            <person name="Raulfs E.C."/>
            <person name="Roemer R."/>
            <person name="Rosser J."/>
            <person name="Segura D."/>
            <person name="Slater S."/>
            <person name="Stricklin S.L."/>
            <person name="Studholme D.J."/>
            <person name="Sun J."/>
            <person name="Viana C.J."/>
            <person name="Wallin E."/>
            <person name="Wang B."/>
            <person name="Wheeler C."/>
            <person name="Zhu H."/>
            <person name="Dean D.R."/>
            <person name="Dixon R."/>
            <person name="Wood D."/>
        </authorList>
    </citation>
    <scope>NUCLEOTIDE SEQUENCE [LARGE SCALE GENOMIC DNA]</scope>
    <source>
        <strain>DJ / ATCC BAA-1303</strain>
    </source>
</reference>
<feature type="chain" id="PRO_1000203293" description="UPF0114 protein Avin_40830">
    <location>
        <begin position="1"/>
        <end position="164"/>
    </location>
</feature>
<feature type="transmembrane region" description="Helical" evidence="1">
    <location>
        <begin position="15"/>
        <end position="35"/>
    </location>
</feature>
<feature type="transmembrane region" description="Helical" evidence="1">
    <location>
        <begin position="53"/>
        <end position="73"/>
    </location>
</feature>
<feature type="transmembrane region" description="Helical" evidence="1">
    <location>
        <begin position="103"/>
        <end position="125"/>
    </location>
</feature>
<feature type="transmembrane region" description="Helical" evidence="1">
    <location>
        <begin position="136"/>
        <end position="156"/>
    </location>
</feature>
<protein>
    <recommendedName>
        <fullName evidence="1">UPF0114 protein Avin_40830</fullName>
    </recommendedName>
</protein>
<organism>
    <name type="scientific">Azotobacter vinelandii (strain DJ / ATCC BAA-1303)</name>
    <dbReference type="NCBI Taxonomy" id="322710"/>
    <lineage>
        <taxon>Bacteria</taxon>
        <taxon>Pseudomonadati</taxon>
        <taxon>Pseudomonadota</taxon>
        <taxon>Gammaproteobacteria</taxon>
        <taxon>Pseudomonadales</taxon>
        <taxon>Pseudomonadaceae</taxon>
        <taxon>Azotobacter</taxon>
    </lineage>
</organism>
<sequence>MERFLENAMYASRWLLAPIYIGLSVALLALTLKFFQEVYHLLPHVLEMAEAELILVLLSMIDMALVGGLLVMVMISGYENFVSQLDIDEGKEKLDWLGKMDSGSLKLKVAASIVAISSIHLLRVFMDAQKIPNDKLLWYVLIHMTFVVSAFVMSYLEKMAKHAH</sequence>
<proteinExistence type="inferred from homology"/>
<comment type="subcellular location">
    <subcellularLocation>
        <location evidence="1">Cell membrane</location>
        <topology evidence="1">Multi-pass membrane protein</topology>
    </subcellularLocation>
</comment>
<comment type="similarity">
    <text evidence="1">Belongs to the UPF0114 family.</text>
</comment>
<keyword id="KW-1003">Cell membrane</keyword>
<keyword id="KW-0472">Membrane</keyword>
<keyword id="KW-0812">Transmembrane</keyword>
<keyword id="KW-1133">Transmembrane helix</keyword>
<evidence type="ECO:0000255" key="1">
    <source>
        <dbReference type="HAMAP-Rule" id="MF_00143"/>
    </source>
</evidence>
<gene>
    <name type="ordered locus">Avin_40830</name>
</gene>
<accession>C1DEB0</accession>
<dbReference type="EMBL" id="CP001157">
    <property type="protein sequence ID" value="ACO80218.1"/>
    <property type="molecule type" value="Genomic_DNA"/>
</dbReference>
<dbReference type="RefSeq" id="WP_012702591.1">
    <property type="nucleotide sequence ID" value="NC_012560.1"/>
</dbReference>
<dbReference type="STRING" id="322710.Avin_40830"/>
<dbReference type="EnsemblBacteria" id="ACO80218">
    <property type="protein sequence ID" value="ACO80218"/>
    <property type="gene ID" value="Avin_40830"/>
</dbReference>
<dbReference type="GeneID" id="88187020"/>
<dbReference type="KEGG" id="avn:Avin_40830"/>
<dbReference type="eggNOG" id="COG2862">
    <property type="taxonomic scope" value="Bacteria"/>
</dbReference>
<dbReference type="HOGENOM" id="CLU_097887_1_1_6"/>
<dbReference type="OrthoDB" id="9783569at2"/>
<dbReference type="Proteomes" id="UP000002424">
    <property type="component" value="Chromosome"/>
</dbReference>
<dbReference type="GO" id="GO:0005886">
    <property type="term" value="C:plasma membrane"/>
    <property type="evidence" value="ECO:0007669"/>
    <property type="project" value="UniProtKB-SubCell"/>
</dbReference>
<dbReference type="HAMAP" id="MF_00143">
    <property type="entry name" value="UPF0114"/>
    <property type="match status" value="1"/>
</dbReference>
<dbReference type="InterPro" id="IPR005134">
    <property type="entry name" value="UPF0114"/>
</dbReference>
<dbReference type="InterPro" id="IPR020761">
    <property type="entry name" value="UPF0114_bac"/>
</dbReference>
<dbReference type="NCBIfam" id="TIGR00645">
    <property type="entry name" value="HI0507"/>
    <property type="match status" value="1"/>
</dbReference>
<dbReference type="PANTHER" id="PTHR38596">
    <property type="entry name" value="UPF0114 PROTEIN YQHA"/>
    <property type="match status" value="1"/>
</dbReference>
<dbReference type="PANTHER" id="PTHR38596:SF1">
    <property type="entry name" value="UPF0114 PROTEIN YQHA"/>
    <property type="match status" value="1"/>
</dbReference>
<dbReference type="Pfam" id="PF03350">
    <property type="entry name" value="UPF0114"/>
    <property type="match status" value="1"/>
</dbReference>
<name>Y4083_AZOVD</name>